<reference key="1">
    <citation type="journal article" date="2005" name="Science">
        <title>The transcriptional landscape of the mammalian genome.</title>
        <authorList>
            <person name="Carninci P."/>
            <person name="Kasukawa T."/>
            <person name="Katayama S."/>
            <person name="Gough J."/>
            <person name="Frith M.C."/>
            <person name="Maeda N."/>
            <person name="Oyama R."/>
            <person name="Ravasi T."/>
            <person name="Lenhard B."/>
            <person name="Wells C."/>
            <person name="Kodzius R."/>
            <person name="Shimokawa K."/>
            <person name="Bajic V.B."/>
            <person name="Brenner S.E."/>
            <person name="Batalov S."/>
            <person name="Forrest A.R."/>
            <person name="Zavolan M."/>
            <person name="Davis M.J."/>
            <person name="Wilming L.G."/>
            <person name="Aidinis V."/>
            <person name="Allen J.E."/>
            <person name="Ambesi-Impiombato A."/>
            <person name="Apweiler R."/>
            <person name="Aturaliya R.N."/>
            <person name="Bailey T.L."/>
            <person name="Bansal M."/>
            <person name="Baxter L."/>
            <person name="Beisel K.W."/>
            <person name="Bersano T."/>
            <person name="Bono H."/>
            <person name="Chalk A.M."/>
            <person name="Chiu K.P."/>
            <person name="Choudhary V."/>
            <person name="Christoffels A."/>
            <person name="Clutterbuck D.R."/>
            <person name="Crowe M.L."/>
            <person name="Dalla E."/>
            <person name="Dalrymple B.P."/>
            <person name="de Bono B."/>
            <person name="Della Gatta G."/>
            <person name="di Bernardo D."/>
            <person name="Down T."/>
            <person name="Engstrom P."/>
            <person name="Fagiolini M."/>
            <person name="Faulkner G."/>
            <person name="Fletcher C.F."/>
            <person name="Fukushima T."/>
            <person name="Furuno M."/>
            <person name="Futaki S."/>
            <person name="Gariboldi M."/>
            <person name="Georgii-Hemming P."/>
            <person name="Gingeras T.R."/>
            <person name="Gojobori T."/>
            <person name="Green R.E."/>
            <person name="Gustincich S."/>
            <person name="Harbers M."/>
            <person name="Hayashi Y."/>
            <person name="Hensch T.K."/>
            <person name="Hirokawa N."/>
            <person name="Hill D."/>
            <person name="Huminiecki L."/>
            <person name="Iacono M."/>
            <person name="Ikeo K."/>
            <person name="Iwama A."/>
            <person name="Ishikawa T."/>
            <person name="Jakt M."/>
            <person name="Kanapin A."/>
            <person name="Katoh M."/>
            <person name="Kawasawa Y."/>
            <person name="Kelso J."/>
            <person name="Kitamura H."/>
            <person name="Kitano H."/>
            <person name="Kollias G."/>
            <person name="Krishnan S.P."/>
            <person name="Kruger A."/>
            <person name="Kummerfeld S.K."/>
            <person name="Kurochkin I.V."/>
            <person name="Lareau L.F."/>
            <person name="Lazarevic D."/>
            <person name="Lipovich L."/>
            <person name="Liu J."/>
            <person name="Liuni S."/>
            <person name="McWilliam S."/>
            <person name="Madan Babu M."/>
            <person name="Madera M."/>
            <person name="Marchionni L."/>
            <person name="Matsuda H."/>
            <person name="Matsuzawa S."/>
            <person name="Miki H."/>
            <person name="Mignone F."/>
            <person name="Miyake S."/>
            <person name="Morris K."/>
            <person name="Mottagui-Tabar S."/>
            <person name="Mulder N."/>
            <person name="Nakano N."/>
            <person name="Nakauchi H."/>
            <person name="Ng P."/>
            <person name="Nilsson R."/>
            <person name="Nishiguchi S."/>
            <person name="Nishikawa S."/>
            <person name="Nori F."/>
            <person name="Ohara O."/>
            <person name="Okazaki Y."/>
            <person name="Orlando V."/>
            <person name="Pang K.C."/>
            <person name="Pavan W.J."/>
            <person name="Pavesi G."/>
            <person name="Pesole G."/>
            <person name="Petrovsky N."/>
            <person name="Piazza S."/>
            <person name="Reed J."/>
            <person name="Reid J.F."/>
            <person name="Ring B.Z."/>
            <person name="Ringwald M."/>
            <person name="Rost B."/>
            <person name="Ruan Y."/>
            <person name="Salzberg S.L."/>
            <person name="Sandelin A."/>
            <person name="Schneider C."/>
            <person name="Schoenbach C."/>
            <person name="Sekiguchi K."/>
            <person name="Semple C.A."/>
            <person name="Seno S."/>
            <person name="Sessa L."/>
            <person name="Sheng Y."/>
            <person name="Shibata Y."/>
            <person name="Shimada H."/>
            <person name="Shimada K."/>
            <person name="Silva D."/>
            <person name="Sinclair B."/>
            <person name="Sperling S."/>
            <person name="Stupka E."/>
            <person name="Sugiura K."/>
            <person name="Sultana R."/>
            <person name="Takenaka Y."/>
            <person name="Taki K."/>
            <person name="Tammoja K."/>
            <person name="Tan S.L."/>
            <person name="Tang S."/>
            <person name="Taylor M.S."/>
            <person name="Tegner J."/>
            <person name="Teichmann S.A."/>
            <person name="Ueda H.R."/>
            <person name="van Nimwegen E."/>
            <person name="Verardo R."/>
            <person name="Wei C.L."/>
            <person name="Yagi K."/>
            <person name="Yamanishi H."/>
            <person name="Zabarovsky E."/>
            <person name="Zhu S."/>
            <person name="Zimmer A."/>
            <person name="Hide W."/>
            <person name="Bult C."/>
            <person name="Grimmond S.M."/>
            <person name="Teasdale R.D."/>
            <person name="Liu E.T."/>
            <person name="Brusic V."/>
            <person name="Quackenbush J."/>
            <person name="Wahlestedt C."/>
            <person name="Mattick J.S."/>
            <person name="Hume D.A."/>
            <person name="Kai C."/>
            <person name="Sasaki D."/>
            <person name="Tomaru Y."/>
            <person name="Fukuda S."/>
            <person name="Kanamori-Katayama M."/>
            <person name="Suzuki M."/>
            <person name="Aoki J."/>
            <person name="Arakawa T."/>
            <person name="Iida J."/>
            <person name="Imamura K."/>
            <person name="Itoh M."/>
            <person name="Kato T."/>
            <person name="Kawaji H."/>
            <person name="Kawagashira N."/>
            <person name="Kawashima T."/>
            <person name="Kojima M."/>
            <person name="Kondo S."/>
            <person name="Konno H."/>
            <person name="Nakano K."/>
            <person name="Ninomiya N."/>
            <person name="Nishio T."/>
            <person name="Okada M."/>
            <person name="Plessy C."/>
            <person name="Shibata K."/>
            <person name="Shiraki T."/>
            <person name="Suzuki S."/>
            <person name="Tagami M."/>
            <person name="Waki K."/>
            <person name="Watahiki A."/>
            <person name="Okamura-Oho Y."/>
            <person name="Suzuki H."/>
            <person name="Kawai J."/>
            <person name="Hayashizaki Y."/>
        </authorList>
    </citation>
    <scope>NUCLEOTIDE SEQUENCE [LARGE SCALE MRNA]</scope>
    <source>
        <strain>C57BL/6J</strain>
        <strain>NOD</strain>
        <tissue>Eye</tissue>
        <tissue>Placenta</tissue>
        <tissue>Skin</tissue>
        <tissue>Spinal cord</tissue>
        <tissue>Thymus</tissue>
    </source>
</reference>
<reference key="2">
    <citation type="journal article" date="2004" name="Genome Res.">
        <title>The status, quality, and expansion of the NIH full-length cDNA project: the Mammalian Gene Collection (MGC).</title>
        <authorList>
            <consortium name="The MGC Project Team"/>
        </authorList>
    </citation>
    <scope>NUCLEOTIDE SEQUENCE [LARGE SCALE MRNA]</scope>
    <source>
        <strain>C57BL/6J</strain>
        <tissue>Brain</tissue>
    </source>
</reference>
<reference key="3">
    <citation type="journal article" date="2010" name="Cell">
        <title>A tissue-specific atlas of mouse protein phosphorylation and expression.</title>
        <authorList>
            <person name="Huttlin E.L."/>
            <person name="Jedrychowski M.P."/>
            <person name="Elias J.E."/>
            <person name="Goswami T."/>
            <person name="Rad R."/>
            <person name="Beausoleil S.A."/>
            <person name="Villen J."/>
            <person name="Haas W."/>
            <person name="Sowa M.E."/>
            <person name="Gygi S.P."/>
        </authorList>
    </citation>
    <scope>IDENTIFICATION BY MASS SPECTROMETRY [LARGE SCALE ANALYSIS]</scope>
    <source>
        <tissue>Brain</tissue>
        <tissue>Kidney</tissue>
        <tissue>Liver</tissue>
        <tissue>Pancreas</tissue>
        <tissue>Spleen</tissue>
        <tissue>Testis</tissue>
    </source>
</reference>
<sequence>MWRLPGRSALRGVRSVVERRSRAEAGTHEAVRAMERAVVRCVPSEPKLSLSFALADGSHKNMQRDQSEPLGRALSRIATNALKGHAKVAAAKKSRKNRAHSSGGAACEATGPEPVATCEPVVKLYYREEAVAEDVLNVDAWQDGAVLQIGDVKYKVERNPPTFTELQLPRYIMAGFPVCPKLGVEFGDPASSVFRWYKEVKPGAAEPGDSGPASSSHSSQPSAWIETGVDERVYTPCNADIGLRLRLHCTPGNGQRFGPSRELESLCPVEAGPGTCTFDHRHLYTKKVTEDSFIRTVSYNILADTYAQTEFSRTVLYPYCAPYALELDYRQNLIQKELTGYNADLICLQEVDRAVFSDSLVPALEAFGLEGVFRIKQHEGLATFYRKSKFRLLSQHDISFQEALKSDPLHKELLEKLALNPLAQEKVLQRSSVLQISVLQSTTDSSKKICVANTHLYWHPKGGYIRLIQMEVALVHIRHVSRDLYPGIPVIFCGDFNSTPSTGMYHFVISGSIAEDHEDWASNGEEERCSMPLSHCFKLKSACGEPAYTNYVGGFHGCLDYIFIDLNTLEVEQVIPLPSHEEVTTHQALPSVSHPSDHIALVCDLKWK</sequence>
<dbReference type="EC" id="3.1.4.-" evidence="2"/>
<dbReference type="EC" id="3.1.13.4" evidence="2"/>
<dbReference type="EMBL" id="AK051991">
    <property type="protein sequence ID" value="BAC34827.1"/>
    <property type="status" value="ALT_INIT"/>
    <property type="molecule type" value="mRNA"/>
</dbReference>
<dbReference type="EMBL" id="AK082947">
    <property type="protein sequence ID" value="BAC38703.1"/>
    <property type="molecule type" value="mRNA"/>
</dbReference>
<dbReference type="EMBL" id="AK088843">
    <property type="protein sequence ID" value="BAC40606.1"/>
    <property type="molecule type" value="mRNA"/>
</dbReference>
<dbReference type="EMBL" id="AK155088">
    <property type="protein sequence ID" value="BAE33039.1"/>
    <property type="molecule type" value="mRNA"/>
</dbReference>
<dbReference type="EMBL" id="AK161083">
    <property type="protein sequence ID" value="BAE36189.1"/>
    <property type="molecule type" value="mRNA"/>
</dbReference>
<dbReference type="EMBL" id="AK167708">
    <property type="protein sequence ID" value="BAE39752.1"/>
    <property type="molecule type" value="mRNA"/>
</dbReference>
<dbReference type="EMBL" id="BC064450">
    <property type="protein sequence ID" value="AAH64450.1"/>
    <property type="molecule type" value="mRNA"/>
</dbReference>
<dbReference type="CCDS" id="CCDS26882.1"/>
<dbReference type="RefSeq" id="NP_848783.3">
    <property type="nucleotide sequence ID" value="NM_178668.3"/>
</dbReference>
<dbReference type="SMR" id="Q3TIU4"/>
<dbReference type="BioGRID" id="229276">
    <property type="interactions" value="32"/>
</dbReference>
<dbReference type="FunCoup" id="Q3TIU4">
    <property type="interactions" value="4243"/>
</dbReference>
<dbReference type="STRING" id="10090.ENSMUSP00000059666"/>
<dbReference type="GlyGen" id="Q3TIU4">
    <property type="glycosylation" value="1 site, 1 O-linked glycan (1 site)"/>
</dbReference>
<dbReference type="iPTMnet" id="Q3TIU4"/>
<dbReference type="PhosphoSitePlus" id="Q3TIU4"/>
<dbReference type="SwissPalm" id="Q3TIU4"/>
<dbReference type="jPOST" id="Q3TIU4"/>
<dbReference type="PaxDb" id="10090-ENSMUSP00000059666"/>
<dbReference type="PeptideAtlas" id="Q3TIU4"/>
<dbReference type="ProteomicsDB" id="287903"/>
<dbReference type="Pumba" id="Q3TIU4"/>
<dbReference type="Antibodypedia" id="46309">
    <property type="antibodies" value="138 antibodies from 23 providers"/>
</dbReference>
<dbReference type="DNASU" id="211948"/>
<dbReference type="Ensembl" id="ENSMUST00000052932.10">
    <property type="protein sequence ID" value="ENSMUSP00000059666.10"/>
    <property type="gene ID" value="ENSMUSG00000043702.10"/>
</dbReference>
<dbReference type="GeneID" id="211948"/>
<dbReference type="KEGG" id="mmu:211948"/>
<dbReference type="UCSC" id="uc007stb.1">
    <property type="organism name" value="mouse"/>
</dbReference>
<dbReference type="AGR" id="MGI:2443226"/>
<dbReference type="CTD" id="201626"/>
<dbReference type="MGI" id="MGI:2443226">
    <property type="gene designation" value="Pde12"/>
</dbReference>
<dbReference type="VEuPathDB" id="HostDB:ENSMUSG00000043702"/>
<dbReference type="eggNOG" id="KOG0620">
    <property type="taxonomic scope" value="Eukaryota"/>
</dbReference>
<dbReference type="GeneTree" id="ENSGT00940000157205"/>
<dbReference type="HOGENOM" id="CLU_016428_7_2_1"/>
<dbReference type="InParanoid" id="Q3TIU4"/>
<dbReference type="OMA" id="FRLKSAC"/>
<dbReference type="OrthoDB" id="412787at2759"/>
<dbReference type="PhylomeDB" id="Q3TIU4"/>
<dbReference type="TreeFam" id="TF323175"/>
<dbReference type="Reactome" id="R-MMU-8983711">
    <property type="pathway name" value="OAS antiviral response"/>
</dbReference>
<dbReference type="BioGRID-ORCS" id="211948">
    <property type="hits" value="6 hits in 76 CRISPR screens"/>
</dbReference>
<dbReference type="ChiTaRS" id="Pde12">
    <property type="organism name" value="mouse"/>
</dbReference>
<dbReference type="PRO" id="PR:Q3TIU4"/>
<dbReference type="Proteomes" id="UP000000589">
    <property type="component" value="Chromosome 14"/>
</dbReference>
<dbReference type="RNAct" id="Q3TIU4">
    <property type="molecule type" value="protein"/>
</dbReference>
<dbReference type="Bgee" id="ENSMUSG00000043702">
    <property type="expression patterns" value="Expressed in ectoplacental cone and 66 other cell types or tissues"/>
</dbReference>
<dbReference type="GO" id="GO:0005759">
    <property type="term" value="C:mitochondrial matrix"/>
    <property type="evidence" value="ECO:0007669"/>
    <property type="project" value="UniProtKB-SubCell"/>
</dbReference>
<dbReference type="GO" id="GO:0005739">
    <property type="term" value="C:mitochondrion"/>
    <property type="evidence" value="ECO:0007005"/>
    <property type="project" value="MGI"/>
</dbReference>
<dbReference type="GO" id="GO:0046872">
    <property type="term" value="F:metal ion binding"/>
    <property type="evidence" value="ECO:0007669"/>
    <property type="project" value="UniProtKB-KW"/>
</dbReference>
<dbReference type="GO" id="GO:0004535">
    <property type="term" value="F:poly(A)-specific ribonuclease activity"/>
    <property type="evidence" value="ECO:0007669"/>
    <property type="project" value="UniProtKB-EC"/>
</dbReference>
<dbReference type="GO" id="GO:0140374">
    <property type="term" value="P:antiviral innate immune response"/>
    <property type="evidence" value="ECO:0007669"/>
    <property type="project" value="Ensembl"/>
</dbReference>
<dbReference type="GO" id="GO:0071359">
    <property type="term" value="P:cellular response to dsRNA"/>
    <property type="evidence" value="ECO:0007669"/>
    <property type="project" value="Ensembl"/>
</dbReference>
<dbReference type="GO" id="GO:0035457">
    <property type="term" value="P:cellular response to interferon-alpha"/>
    <property type="evidence" value="ECO:0007669"/>
    <property type="project" value="Ensembl"/>
</dbReference>
<dbReference type="GO" id="GO:0071346">
    <property type="term" value="P:cellular response to type II interferon"/>
    <property type="evidence" value="ECO:0007669"/>
    <property type="project" value="Ensembl"/>
</dbReference>
<dbReference type="GO" id="GO:0000958">
    <property type="term" value="P:mitochondrial mRNA catabolic process"/>
    <property type="evidence" value="ECO:0007669"/>
    <property type="project" value="Ensembl"/>
</dbReference>
<dbReference type="GO" id="GO:0006397">
    <property type="term" value="P:mRNA processing"/>
    <property type="evidence" value="ECO:0007669"/>
    <property type="project" value="UniProtKB-KW"/>
</dbReference>
<dbReference type="GO" id="GO:0000288">
    <property type="term" value="P:nuclear-transcribed mRNA catabolic process, deadenylation-dependent decay"/>
    <property type="evidence" value="ECO:0007669"/>
    <property type="project" value="Ensembl"/>
</dbReference>
<dbReference type="GO" id="GO:0045070">
    <property type="term" value="P:positive regulation of viral genome replication"/>
    <property type="evidence" value="ECO:0007669"/>
    <property type="project" value="Ensembl"/>
</dbReference>
<dbReference type="GO" id="GO:0044528">
    <property type="term" value="P:regulation of mitochondrial mRNA stability"/>
    <property type="evidence" value="ECO:0007669"/>
    <property type="project" value="Ensembl"/>
</dbReference>
<dbReference type="FunFam" id="3.60.10.10:FF:000018">
    <property type="entry name" value="2',5'-phosphodiesterase 12"/>
    <property type="match status" value="1"/>
</dbReference>
<dbReference type="Gene3D" id="3.60.10.10">
    <property type="entry name" value="Endonuclease/exonuclease/phosphatase"/>
    <property type="match status" value="1"/>
</dbReference>
<dbReference type="InterPro" id="IPR050410">
    <property type="entry name" value="CCR4/nocturin_mRNA_transcr"/>
</dbReference>
<dbReference type="InterPro" id="IPR036691">
    <property type="entry name" value="Endo/exonu/phosph_ase_sf"/>
</dbReference>
<dbReference type="InterPro" id="IPR005135">
    <property type="entry name" value="Endo/exonuclease/phosphatase"/>
</dbReference>
<dbReference type="InterPro" id="IPR048821">
    <property type="entry name" value="PDE12-like_N"/>
</dbReference>
<dbReference type="PANTHER" id="PTHR12121:SF37">
    <property type="entry name" value="2',5'-PHOSPHODIESTERASE 12"/>
    <property type="match status" value="1"/>
</dbReference>
<dbReference type="PANTHER" id="PTHR12121">
    <property type="entry name" value="CARBON CATABOLITE REPRESSOR PROTEIN 4"/>
    <property type="match status" value="1"/>
</dbReference>
<dbReference type="Pfam" id="PF03372">
    <property type="entry name" value="Exo_endo_phos"/>
    <property type="match status" value="1"/>
</dbReference>
<dbReference type="Pfam" id="PF21171">
    <property type="entry name" value="PDE12-like_N"/>
    <property type="match status" value="1"/>
</dbReference>
<dbReference type="SUPFAM" id="SSF56219">
    <property type="entry name" value="DNase I-like"/>
    <property type="match status" value="1"/>
</dbReference>
<keyword id="KW-0269">Exonuclease</keyword>
<keyword id="KW-0378">Hydrolase</keyword>
<keyword id="KW-0460">Magnesium</keyword>
<keyword id="KW-0479">Metal-binding</keyword>
<keyword id="KW-0496">Mitochondrion</keyword>
<keyword id="KW-0507">mRNA processing</keyword>
<keyword id="KW-0540">Nuclease</keyword>
<keyword id="KW-0597">Phosphoprotein</keyword>
<keyword id="KW-1185">Reference proteome</keyword>
<keyword id="KW-0809">Transit peptide</keyword>
<gene>
    <name type="primary">Pde12</name>
</gene>
<proteinExistence type="evidence at protein level"/>
<protein>
    <recommendedName>
        <fullName>2',5'-phosphodiesterase 12</fullName>
        <shortName>2'-PDE</shortName>
        <shortName>2-PDE</shortName>
        <ecNumber evidence="2">3.1.4.-</ecNumber>
    </recommendedName>
    <alternativeName>
        <fullName>Mitochondrial deadenylase</fullName>
        <ecNumber evidence="2">3.1.13.4</ecNumber>
    </alternativeName>
</protein>
<comment type="function">
    <text evidence="2">Enzyme that cleaves 2',5'-phosphodiester bond linking adenosines of the 5'-triphosphorylated oligoadenylates, triphosphorylated oligoadenylates referred as 2-5A modulates the 2-5A system. Degrades triphosphorylated 2-5A to produce AMP and ATP. Also cleaves 3',5'-phosphodiester bond of oligoadenylates. Plays a role as a negative regulator of the 2-5A system that is one of the major pathways for antiviral and antitumor functions induced by interferons (IFNs). Suppression of this enzyme increases cellular 2-5A levels and decreases viral replication in cultured small-airway epithelial cells.</text>
</comment>
<comment type="catalytic activity">
    <reaction evidence="2">
        <text>Exonucleolytic cleavage of poly(A) to 5'-AMP.</text>
        <dbReference type="EC" id="3.1.13.4"/>
    </reaction>
</comment>
<comment type="cofactor">
    <cofactor evidence="2">
        <name>Mg(2+)</name>
        <dbReference type="ChEBI" id="CHEBI:18420"/>
    </cofactor>
</comment>
<comment type="subcellular location">
    <subcellularLocation>
        <location evidence="2">Mitochondrion matrix</location>
    </subcellularLocation>
</comment>
<comment type="similarity">
    <text evidence="5">Belongs to the CCR4/nocturin family.</text>
</comment>
<comment type="sequence caution" evidence="5">
    <conflict type="erroneous initiation">
        <sequence resource="EMBL-CDS" id="BAC34827"/>
    </conflict>
</comment>
<name>PDE12_MOUSE</name>
<accession>Q3TIU4</accession>
<accession>Q3TTY4</accession>
<accession>Q6P2L5</accession>
<accession>Q8BKH8</accession>
<accession>Q8BTS8</accession>
<accession>Q8BUQ5</accession>
<organism>
    <name type="scientific">Mus musculus</name>
    <name type="common">Mouse</name>
    <dbReference type="NCBI Taxonomy" id="10090"/>
    <lineage>
        <taxon>Eukaryota</taxon>
        <taxon>Metazoa</taxon>
        <taxon>Chordata</taxon>
        <taxon>Craniata</taxon>
        <taxon>Vertebrata</taxon>
        <taxon>Euteleostomi</taxon>
        <taxon>Mammalia</taxon>
        <taxon>Eutheria</taxon>
        <taxon>Euarchontoglires</taxon>
        <taxon>Glires</taxon>
        <taxon>Rodentia</taxon>
        <taxon>Myomorpha</taxon>
        <taxon>Muroidea</taxon>
        <taxon>Muridae</taxon>
        <taxon>Murinae</taxon>
        <taxon>Mus</taxon>
        <taxon>Mus</taxon>
    </lineage>
</organism>
<evidence type="ECO:0000250" key="1"/>
<evidence type="ECO:0000250" key="2">
    <source>
        <dbReference type="UniProtKB" id="Q6L8Q7"/>
    </source>
</evidence>
<evidence type="ECO:0000250" key="3">
    <source>
        <dbReference type="UniProtKB" id="Q96LI5"/>
    </source>
</evidence>
<evidence type="ECO:0000256" key="4">
    <source>
        <dbReference type="SAM" id="MobiDB-lite"/>
    </source>
</evidence>
<evidence type="ECO:0000305" key="5"/>
<feature type="transit peptide" description="Mitochondrion" evidence="1">
    <location>
        <begin position="1"/>
        <end position="16"/>
    </location>
</feature>
<feature type="chain" id="PRO_0000324313" description="2',5'-phosphodiesterase 12">
    <location>
        <begin position="17"/>
        <end position="608"/>
    </location>
</feature>
<feature type="region of interest" description="Disordered" evidence="4">
    <location>
        <begin position="90"/>
        <end position="111"/>
    </location>
</feature>
<feature type="compositionally biased region" description="Basic residues" evidence="4">
    <location>
        <begin position="90"/>
        <end position="99"/>
    </location>
</feature>
<feature type="active site" description="Proton donor/acceptor" evidence="3">
    <location>
        <position position="495"/>
    </location>
</feature>
<feature type="binding site" evidence="2">
    <location>
        <position position="350"/>
    </location>
    <ligand>
        <name>Mg(2+)</name>
        <dbReference type="ChEBI" id="CHEBI:18420"/>
        <label>1</label>
    </ligand>
</feature>
<feature type="binding site" evidence="2">
    <location>
        <position position="495"/>
    </location>
    <ligand>
        <name>Mg(2+)</name>
        <dbReference type="ChEBI" id="CHEBI:18420"/>
        <label>2</label>
    </ligand>
</feature>
<feature type="binding site" evidence="2">
    <location>
        <position position="497"/>
    </location>
    <ligand>
        <name>Mg(2+)</name>
        <dbReference type="ChEBI" id="CHEBI:18420"/>
        <label>2</label>
    </ligand>
</feature>
<feature type="modified residue" description="Phosphoserine" evidence="2">
    <location>
        <position position="216"/>
    </location>
</feature>
<feature type="sequence conflict" description="In Ref. 1; BAC38703." evidence="5" ref="1">
    <original>SR</original>
    <variation>TG</variation>
    <location>
        <begin position="21"/>
        <end position="22"/>
    </location>
</feature>
<feature type="sequence conflict" description="In Ref. 1; BAC40606/BAE33039." evidence="5" ref="1">
    <original>G</original>
    <variation>S</variation>
    <location>
        <position position="104"/>
    </location>
</feature>
<feature type="sequence conflict" description="In Ref. 1; BAE39752." evidence="5" ref="1">
    <original>K</original>
    <variation>E</variation>
    <location>
        <position position="123"/>
    </location>
</feature>
<feature type="sequence conflict" description="In Ref. 1; BAC40606/BAE33039." evidence="5" ref="1">
    <original>E</original>
    <variation>A</variation>
    <location>
        <position position="471"/>
    </location>
</feature>
<feature type="sequence conflict" description="In Ref. 1; BAE36189." evidence="5" ref="1">
    <original>C</original>
    <variation>G</variation>
    <location>
        <position position="493"/>
    </location>
</feature>
<feature type="sequence conflict" description="In Ref. 1; BAE36189." evidence="5" ref="1">
    <original>N</original>
    <variation>H</variation>
    <location>
        <position position="523"/>
    </location>
</feature>
<feature type="sequence conflict" description="In Ref. 1; BAE36189." evidence="5" ref="1">
    <original>K</original>
    <variation>Q</variation>
    <location>
        <position position="538"/>
    </location>
</feature>
<feature type="sequence conflict" description="In Ref. 1; BAE39752." evidence="5" ref="1">
    <original>P</original>
    <variation>L</variation>
    <location>
        <position position="578"/>
    </location>
</feature>